<gene>
    <name type="ORF">An01g11360</name>
</gene>
<comment type="function">
    <text evidence="1">Cotranslationally removes the N-terminal methionine from nascent proteins. The N-terminal methionine is often cleaved when the second residue in the primary sequence is small and uncharged (Met-Ala-, Cys, Gly, Pro, Ser, Thr, or Val).</text>
</comment>
<comment type="catalytic activity">
    <reaction evidence="1">
        <text>Release of N-terminal amino acids, preferentially methionine, from peptides and arylamides.</text>
        <dbReference type="EC" id="3.4.11.18"/>
    </reaction>
</comment>
<comment type="cofactor">
    <cofactor evidence="1">
        <name>Co(2+)</name>
        <dbReference type="ChEBI" id="CHEBI:48828"/>
    </cofactor>
    <cofactor evidence="1">
        <name>Zn(2+)</name>
        <dbReference type="ChEBI" id="CHEBI:29105"/>
    </cofactor>
    <cofactor evidence="1">
        <name>Mn(2+)</name>
        <dbReference type="ChEBI" id="CHEBI:29035"/>
    </cofactor>
    <cofactor evidence="1">
        <name>Fe(2+)</name>
        <dbReference type="ChEBI" id="CHEBI:29033"/>
    </cofactor>
    <text evidence="1">Binds 2 divalent metal cations per subunit. Has a high-affinity and a low affinity metal-binding site. The true nature of the physiological cofactor is under debate. The enzyme is active with cobalt, zinc, manganese or divalent iron ions. Most likely, methionine aminopeptidases function as mononuclear Fe(2+)-metalloproteases under physiological conditions, and the catalytically relevant metal-binding site has been assigned to the histidine-containing high-affinity site.</text>
</comment>
<comment type="subcellular location">
    <subcellularLocation>
        <location evidence="1">Cytoplasm</location>
    </subcellularLocation>
</comment>
<comment type="similarity">
    <text evidence="1">Belongs to the peptidase M24A family. Methionine aminopeptidase eukaryotic type 2 subfamily.</text>
</comment>
<organism>
    <name type="scientific">Aspergillus niger (strain ATCC MYA-4892 / CBS 513.88 / FGSC A1513)</name>
    <dbReference type="NCBI Taxonomy" id="425011"/>
    <lineage>
        <taxon>Eukaryota</taxon>
        <taxon>Fungi</taxon>
        <taxon>Dikarya</taxon>
        <taxon>Ascomycota</taxon>
        <taxon>Pezizomycotina</taxon>
        <taxon>Eurotiomycetes</taxon>
        <taxon>Eurotiomycetidae</taxon>
        <taxon>Eurotiales</taxon>
        <taxon>Aspergillaceae</taxon>
        <taxon>Aspergillus</taxon>
        <taxon>Aspergillus subgen. Circumdati</taxon>
    </lineage>
</organism>
<keyword id="KW-0031">Aminopeptidase</keyword>
<keyword id="KW-0963">Cytoplasm</keyword>
<keyword id="KW-0378">Hydrolase</keyword>
<keyword id="KW-0479">Metal-binding</keyword>
<keyword id="KW-0645">Protease</keyword>
<keyword id="KW-1185">Reference proteome</keyword>
<proteinExistence type="inferred from homology"/>
<evidence type="ECO:0000255" key="1">
    <source>
        <dbReference type="HAMAP-Rule" id="MF_03175"/>
    </source>
</evidence>
<evidence type="ECO:0000256" key="2">
    <source>
        <dbReference type="SAM" id="MobiDB-lite"/>
    </source>
</evidence>
<feature type="chain" id="PRO_0000407624" description="Methionine aminopeptidase 2-1">
    <location>
        <begin position="1"/>
        <end position="475"/>
    </location>
</feature>
<feature type="region of interest" description="Disordered" evidence="2">
    <location>
        <begin position="1"/>
        <end position="97"/>
    </location>
</feature>
<feature type="compositionally biased region" description="Basic and acidic residues" evidence="2">
    <location>
        <begin position="1"/>
        <end position="12"/>
    </location>
</feature>
<feature type="compositionally biased region" description="Acidic residues" evidence="2">
    <location>
        <begin position="44"/>
        <end position="57"/>
    </location>
</feature>
<feature type="compositionally biased region" description="Basic residues" evidence="2">
    <location>
        <begin position="70"/>
        <end position="83"/>
    </location>
</feature>
<feature type="binding site" evidence="1">
    <location>
        <position position="211"/>
    </location>
    <ligand>
        <name>substrate</name>
    </ligand>
</feature>
<feature type="binding site" evidence="1">
    <location>
        <position position="232"/>
    </location>
    <ligand>
        <name>a divalent metal cation</name>
        <dbReference type="ChEBI" id="CHEBI:60240"/>
        <label>1</label>
    </ligand>
</feature>
<feature type="binding site" evidence="1">
    <location>
        <position position="243"/>
    </location>
    <ligand>
        <name>a divalent metal cation</name>
        <dbReference type="ChEBI" id="CHEBI:60240"/>
        <label>1</label>
    </ligand>
</feature>
<feature type="binding site" evidence="1">
    <location>
        <position position="243"/>
    </location>
    <ligand>
        <name>a divalent metal cation</name>
        <dbReference type="ChEBI" id="CHEBI:60240"/>
        <label>2</label>
        <note>catalytic</note>
    </ligand>
</feature>
<feature type="binding site" evidence="1">
    <location>
        <position position="312"/>
    </location>
    <ligand>
        <name>a divalent metal cation</name>
        <dbReference type="ChEBI" id="CHEBI:60240"/>
        <label>2</label>
        <note>catalytic</note>
    </ligand>
</feature>
<feature type="binding site" evidence="1">
    <location>
        <position position="320"/>
    </location>
    <ligand>
        <name>substrate</name>
    </ligand>
</feature>
<feature type="binding site" evidence="1">
    <location>
        <position position="345"/>
    </location>
    <ligand>
        <name>a divalent metal cation</name>
        <dbReference type="ChEBI" id="CHEBI:60240"/>
        <label>2</label>
        <note>catalytic</note>
    </ligand>
</feature>
<feature type="binding site" evidence="1">
    <location>
        <position position="456"/>
    </location>
    <ligand>
        <name>a divalent metal cation</name>
        <dbReference type="ChEBI" id="CHEBI:60240"/>
        <label>1</label>
    </ligand>
</feature>
<feature type="binding site" evidence="1">
    <location>
        <position position="456"/>
    </location>
    <ligand>
        <name>a divalent metal cation</name>
        <dbReference type="ChEBI" id="CHEBI:60240"/>
        <label>2</label>
        <note>catalytic</note>
    </ligand>
</feature>
<reference key="1">
    <citation type="journal article" date="2007" name="Nat. Biotechnol.">
        <title>Genome sequencing and analysis of the versatile cell factory Aspergillus niger CBS 513.88.</title>
        <authorList>
            <person name="Pel H.J."/>
            <person name="de Winde J.H."/>
            <person name="Archer D.B."/>
            <person name="Dyer P.S."/>
            <person name="Hofmann G."/>
            <person name="Schaap P.J."/>
            <person name="Turner G."/>
            <person name="de Vries R.P."/>
            <person name="Albang R."/>
            <person name="Albermann K."/>
            <person name="Andersen M.R."/>
            <person name="Bendtsen J.D."/>
            <person name="Benen J.A.E."/>
            <person name="van den Berg M."/>
            <person name="Breestraat S."/>
            <person name="Caddick M.X."/>
            <person name="Contreras R."/>
            <person name="Cornell M."/>
            <person name="Coutinho P.M."/>
            <person name="Danchin E.G.J."/>
            <person name="Debets A.J.M."/>
            <person name="Dekker P."/>
            <person name="van Dijck P.W.M."/>
            <person name="van Dijk A."/>
            <person name="Dijkhuizen L."/>
            <person name="Driessen A.J.M."/>
            <person name="d'Enfert C."/>
            <person name="Geysens S."/>
            <person name="Goosen C."/>
            <person name="Groot G.S.P."/>
            <person name="de Groot P.W.J."/>
            <person name="Guillemette T."/>
            <person name="Henrissat B."/>
            <person name="Herweijer M."/>
            <person name="van den Hombergh J.P.T.W."/>
            <person name="van den Hondel C.A.M.J.J."/>
            <person name="van der Heijden R.T.J.M."/>
            <person name="van der Kaaij R.M."/>
            <person name="Klis F.M."/>
            <person name="Kools H.J."/>
            <person name="Kubicek C.P."/>
            <person name="van Kuyk P.A."/>
            <person name="Lauber J."/>
            <person name="Lu X."/>
            <person name="van der Maarel M.J.E.C."/>
            <person name="Meulenberg R."/>
            <person name="Menke H."/>
            <person name="Mortimer M.A."/>
            <person name="Nielsen J."/>
            <person name="Oliver S.G."/>
            <person name="Olsthoorn M."/>
            <person name="Pal K."/>
            <person name="van Peij N.N.M.E."/>
            <person name="Ram A.F.J."/>
            <person name="Rinas U."/>
            <person name="Roubos J.A."/>
            <person name="Sagt C.M.J."/>
            <person name="Schmoll M."/>
            <person name="Sun J."/>
            <person name="Ussery D."/>
            <person name="Varga J."/>
            <person name="Vervecken W."/>
            <person name="van de Vondervoort P.J.J."/>
            <person name="Wedler H."/>
            <person name="Woesten H.A.B."/>
            <person name="Zeng A.-P."/>
            <person name="van Ooyen A.J.J."/>
            <person name="Visser J."/>
            <person name="Stam H."/>
        </authorList>
    </citation>
    <scope>NUCLEOTIDE SEQUENCE [LARGE SCALE GENOMIC DNA]</scope>
    <source>
        <strain>ATCC MYA-4892 / CBS 513.88 / FGSC A1513</strain>
    </source>
</reference>
<accession>A2QAF9</accession>
<name>MAP21_ASPNC</name>
<protein>
    <recommendedName>
        <fullName evidence="1">Methionine aminopeptidase 2-1</fullName>
        <shortName evidence="1">MAP 2-1</shortName>
        <shortName evidence="1">MetAP 2-1</shortName>
        <ecNumber evidence="1">3.4.11.18</ecNumber>
    </recommendedName>
    <alternativeName>
        <fullName evidence="1">Peptidase M</fullName>
    </alternativeName>
</protein>
<sequence>MGSKSPEGHRQTPDASNSSELKPANPNPKPARNGSQSADLDGGNLDDDNDDDGEANEEAGVKTSADSTDKKKKRKRSKKKTKKGTLPLKQSSPPRVLVSSLFPSGYPIGECVPYQDDNTSRTTDEELRYNSRLWDKDFLDEYRQAAEIHRQVRQYAQNELIKPGASLTTIAEGIEDGVRALSGHQGLEPGDGFKAGMGFPTGLCLNNVAAHWTPNPGAKDVFLDKSDVLKVDFGVHVNGRIVDSAFTVAFDHTYDNLLTAVKEATNTGIMHAGIDARVSEIGAAIQEVMESYEVEIAGKTHPVKAIRNITGHDILRYNIHGGKQVPFIKNDRPDKMEEGEVFAIETFGSTGRGVLHDDVGLCLSNVFSKANAPQVGVYGYGRNTDVSGANLRLSSAKNLLKTIDANFGSLVFCRRYLERLGVEKYHLGMRHLIDNGIVEYYEPLVDVKGSYTAQFEHTILLHNGGKEVISRGDDY</sequence>
<dbReference type="EC" id="3.4.11.18" evidence="1"/>
<dbReference type="EMBL" id="AM269981">
    <property type="protein sequence ID" value="CAK44040.1"/>
    <property type="molecule type" value="Genomic_DNA"/>
</dbReference>
<dbReference type="SMR" id="A2QAF9"/>
<dbReference type="MEROPS" id="M24.002"/>
<dbReference type="EnsemblFungi" id="CAK44040">
    <property type="protein sequence ID" value="CAK44040"/>
    <property type="gene ID" value="An01g11360"/>
</dbReference>
<dbReference type="VEuPathDB" id="FungiDB:An01g11360"/>
<dbReference type="HOGENOM" id="CLU_015857_7_1_1"/>
<dbReference type="Proteomes" id="UP000006706">
    <property type="component" value="Chromosome 2R"/>
</dbReference>
<dbReference type="GO" id="GO:0005737">
    <property type="term" value="C:cytoplasm"/>
    <property type="evidence" value="ECO:0007669"/>
    <property type="project" value="UniProtKB-SubCell"/>
</dbReference>
<dbReference type="GO" id="GO:0004239">
    <property type="term" value="F:initiator methionyl aminopeptidase activity"/>
    <property type="evidence" value="ECO:0007669"/>
    <property type="project" value="UniProtKB-UniRule"/>
</dbReference>
<dbReference type="GO" id="GO:0046872">
    <property type="term" value="F:metal ion binding"/>
    <property type="evidence" value="ECO:0007669"/>
    <property type="project" value="UniProtKB-UniRule"/>
</dbReference>
<dbReference type="GO" id="GO:0070006">
    <property type="term" value="F:metalloaminopeptidase activity"/>
    <property type="evidence" value="ECO:0007669"/>
    <property type="project" value="UniProtKB-UniRule"/>
</dbReference>
<dbReference type="GO" id="GO:0006508">
    <property type="term" value="P:proteolysis"/>
    <property type="evidence" value="ECO:0007669"/>
    <property type="project" value="UniProtKB-KW"/>
</dbReference>
<dbReference type="CDD" id="cd01088">
    <property type="entry name" value="MetAP2"/>
    <property type="match status" value="1"/>
</dbReference>
<dbReference type="Gene3D" id="3.90.230.10">
    <property type="entry name" value="Creatinase/methionine aminopeptidase superfamily"/>
    <property type="match status" value="1"/>
</dbReference>
<dbReference type="Gene3D" id="1.10.10.10">
    <property type="entry name" value="Winged helix-like DNA-binding domain superfamily/Winged helix DNA-binding domain"/>
    <property type="match status" value="1"/>
</dbReference>
<dbReference type="HAMAP" id="MF_03175">
    <property type="entry name" value="MetAP_2_euk"/>
    <property type="match status" value="1"/>
</dbReference>
<dbReference type="InterPro" id="IPR036005">
    <property type="entry name" value="Creatinase/aminopeptidase-like"/>
</dbReference>
<dbReference type="InterPro" id="IPR050247">
    <property type="entry name" value="Met_Aminopeptidase_Type2"/>
</dbReference>
<dbReference type="InterPro" id="IPR000994">
    <property type="entry name" value="Pept_M24"/>
</dbReference>
<dbReference type="InterPro" id="IPR001714">
    <property type="entry name" value="Pept_M24_MAP"/>
</dbReference>
<dbReference type="InterPro" id="IPR002468">
    <property type="entry name" value="Pept_M24A_MAP2"/>
</dbReference>
<dbReference type="InterPro" id="IPR018349">
    <property type="entry name" value="Pept_M24A_MAP2_BS"/>
</dbReference>
<dbReference type="InterPro" id="IPR036388">
    <property type="entry name" value="WH-like_DNA-bd_sf"/>
</dbReference>
<dbReference type="InterPro" id="IPR036390">
    <property type="entry name" value="WH_DNA-bd_sf"/>
</dbReference>
<dbReference type="NCBIfam" id="TIGR00501">
    <property type="entry name" value="met_pdase_II"/>
    <property type="match status" value="1"/>
</dbReference>
<dbReference type="PANTHER" id="PTHR45777">
    <property type="entry name" value="METHIONINE AMINOPEPTIDASE 2"/>
    <property type="match status" value="1"/>
</dbReference>
<dbReference type="PANTHER" id="PTHR45777:SF1">
    <property type="entry name" value="METHIONINE AMINOPEPTIDASE 2-2"/>
    <property type="match status" value="1"/>
</dbReference>
<dbReference type="Pfam" id="PF00557">
    <property type="entry name" value="Peptidase_M24"/>
    <property type="match status" value="1"/>
</dbReference>
<dbReference type="PRINTS" id="PR00599">
    <property type="entry name" value="MAPEPTIDASE"/>
</dbReference>
<dbReference type="SUPFAM" id="SSF55920">
    <property type="entry name" value="Creatinase/aminopeptidase"/>
    <property type="match status" value="1"/>
</dbReference>
<dbReference type="SUPFAM" id="SSF46785">
    <property type="entry name" value="Winged helix' DNA-binding domain"/>
    <property type="match status" value="1"/>
</dbReference>
<dbReference type="PROSITE" id="PS01202">
    <property type="entry name" value="MAP_2"/>
    <property type="match status" value="1"/>
</dbReference>